<feature type="chain" id="PRO_1000126199" description="UPF0178 protein lwe1471">
    <location>
        <begin position="1"/>
        <end position="149"/>
    </location>
</feature>
<reference key="1">
    <citation type="journal article" date="2006" name="J. Bacteriol.">
        <title>Whole-genome sequence of Listeria welshimeri reveals common steps in genome reduction with Listeria innocua as compared to Listeria monocytogenes.</title>
        <authorList>
            <person name="Hain T."/>
            <person name="Steinweg C."/>
            <person name="Kuenne C.T."/>
            <person name="Billion A."/>
            <person name="Ghai R."/>
            <person name="Chatterjee S.S."/>
            <person name="Domann E."/>
            <person name="Kaerst U."/>
            <person name="Goesmann A."/>
            <person name="Bekel T."/>
            <person name="Bartels D."/>
            <person name="Kaiser O."/>
            <person name="Meyer F."/>
            <person name="Puehler A."/>
            <person name="Weisshaar B."/>
            <person name="Wehland J."/>
            <person name="Liang C."/>
            <person name="Dandekar T."/>
            <person name="Lampidis R."/>
            <person name="Kreft J."/>
            <person name="Goebel W."/>
            <person name="Chakraborty T."/>
        </authorList>
    </citation>
    <scope>NUCLEOTIDE SEQUENCE [LARGE SCALE GENOMIC DNA]</scope>
    <source>
        <strain>ATCC 35897 / DSM 20650 / CCUG 15529 / CIP 8149 / NCTC 11857 / SLCC 5334 / V8</strain>
    </source>
</reference>
<comment type="similarity">
    <text evidence="1">Belongs to the UPF0178 family.</text>
</comment>
<accession>A0AIQ7</accession>
<name>Y1471_LISW6</name>
<proteinExistence type="inferred from homology"/>
<gene>
    <name type="ordered locus">lwe1471</name>
</gene>
<organism>
    <name type="scientific">Listeria welshimeri serovar 6b (strain ATCC 35897 / DSM 20650 / CCUG 15529 / CIP 8149 / NCTC 11857 / SLCC 5334 / V8)</name>
    <dbReference type="NCBI Taxonomy" id="386043"/>
    <lineage>
        <taxon>Bacteria</taxon>
        <taxon>Bacillati</taxon>
        <taxon>Bacillota</taxon>
        <taxon>Bacilli</taxon>
        <taxon>Bacillales</taxon>
        <taxon>Listeriaceae</taxon>
        <taxon>Listeria</taxon>
    </lineage>
</organism>
<protein>
    <recommendedName>
        <fullName evidence="1">UPF0178 protein lwe1471</fullName>
    </recommendedName>
</protein>
<evidence type="ECO:0000255" key="1">
    <source>
        <dbReference type="HAMAP-Rule" id="MF_00489"/>
    </source>
</evidence>
<dbReference type="EMBL" id="AM263198">
    <property type="protein sequence ID" value="CAK20889.1"/>
    <property type="molecule type" value="Genomic_DNA"/>
</dbReference>
<dbReference type="STRING" id="386043.lwe1471"/>
<dbReference type="KEGG" id="lwe:lwe1471"/>
<dbReference type="eggNOG" id="COG1671">
    <property type="taxonomic scope" value="Bacteria"/>
</dbReference>
<dbReference type="HOGENOM" id="CLU_106619_0_0_9"/>
<dbReference type="Proteomes" id="UP000000779">
    <property type="component" value="Chromosome"/>
</dbReference>
<dbReference type="CDD" id="cd18720">
    <property type="entry name" value="PIN_YqxD-like"/>
    <property type="match status" value="1"/>
</dbReference>
<dbReference type="HAMAP" id="MF_00489">
    <property type="entry name" value="UPF0178"/>
    <property type="match status" value="1"/>
</dbReference>
<dbReference type="InterPro" id="IPR003791">
    <property type="entry name" value="UPF0178"/>
</dbReference>
<dbReference type="NCBIfam" id="NF001095">
    <property type="entry name" value="PRK00124.1"/>
    <property type="match status" value="1"/>
</dbReference>
<dbReference type="PANTHER" id="PTHR35146">
    <property type="entry name" value="UPF0178 PROTEIN YAII"/>
    <property type="match status" value="1"/>
</dbReference>
<dbReference type="PANTHER" id="PTHR35146:SF1">
    <property type="entry name" value="UPF0178 PROTEIN YAII"/>
    <property type="match status" value="1"/>
</dbReference>
<dbReference type="Pfam" id="PF02639">
    <property type="entry name" value="DUF188"/>
    <property type="match status" value="1"/>
</dbReference>
<sequence length="149" mass="17094">MEYVPKILVDADACPVKAEIKQVAEQFQLEVIFVASFNHYSVNTNGENWIFVDTGKESADMRMMNIANKGDIIVTQDIGLASILLAKGTYVFSNRGELYREEEMSLMLDIRYRHAKERQQGKYSKGPKAMSDQDRSLFKDRITTFLQNK</sequence>